<protein>
    <recommendedName>
        <fullName>Autophagy-related protein 13</fullName>
    </recommendedName>
</protein>
<evidence type="ECO:0000250" key="1"/>
<evidence type="ECO:0000250" key="2">
    <source>
        <dbReference type="UniProtKB" id="O75143"/>
    </source>
</evidence>
<evidence type="ECO:0000250" key="3">
    <source>
        <dbReference type="UniProtKB" id="Q91YI1"/>
    </source>
</evidence>
<evidence type="ECO:0000256" key="4">
    <source>
        <dbReference type="SAM" id="MobiDB-lite"/>
    </source>
</evidence>
<evidence type="ECO:0000305" key="5"/>
<reference key="1">
    <citation type="submission" date="2006-09" db="EMBL/GenBank/DDBJ databases">
        <authorList>
            <consortium name="NIH - Mammalian Gene Collection (MGC) project"/>
        </authorList>
    </citation>
    <scope>NUCLEOTIDE SEQUENCE [LARGE SCALE MRNA]</scope>
    <source>
        <strain>Hereford</strain>
        <tissue>Brain cortex</tissue>
    </source>
</reference>
<proteinExistence type="evidence at transcript level"/>
<comment type="function">
    <text evidence="2">Autophagy factor required for autophagosome formation and mitophagy. Target of the TOR kinase signaling pathway that regulates autophagy through the control of the phosphorylation status of ATG13 and ULK1, and the regulation of the ATG13-ULK1-RB1CC1 complex. Through its regulation of ULK1 activity, plays a role in the regulation of the kinase activity of mTORC1 and cell proliferation.</text>
</comment>
<comment type="subunit">
    <text evidence="2">Part of a complex consisting of ATG13, ULK1 and RB1CC1. Interacts with ATG101. Interacts with ULK1 (via C-terminus). Interacts with ULK2 (via C-terminus). Interacts (via the LIR motif) with GABARAP, GABARAPL, GABARAPL2. Interacts (via the LIR motif) with MAP1LC3A, MAP1LC3B and MAP1LC3C. Interacts with TAB2 and TAB3. Interacts with C9orf72.</text>
</comment>
<comment type="subcellular location">
    <subcellularLocation>
        <location evidence="3">Cytoplasm</location>
        <location evidence="3">Cytosol</location>
    </subcellularLocation>
    <subcellularLocation>
        <location evidence="3">Preautophagosomal structure</location>
    </subcellularLocation>
    <text evidence="3">Under starvation conditions, is localized to puncate structures primarily representing the isolation membrane; the isolation membrane sequesters a portion of the cytoplasm resulting in autophagosome formation.</text>
</comment>
<comment type="domain">
    <text evidence="2">The LIR motif (LC3-interacting region) is required for the interaction with the ATG8 family proteins GABARAP, GABARAPL, GABARAPL2, and MAP1LC3A.</text>
</comment>
<comment type="PTM">
    <text evidence="2">Phosphorylated by ULK1, ULK2 and mTOR. Phosphorylation status depends on nutrient-rich conditions; dephosphorylated during starvation or following treatment with rapamycin. ULK1-mediated phosphorylation of ATG13 at Ser-318 is required for efficient clearance of depolarized mitochondria.</text>
</comment>
<comment type="similarity">
    <text evidence="5">Belongs to the ATG13 family. Metazoan subfamily.</text>
</comment>
<keyword id="KW-0007">Acetylation</keyword>
<keyword id="KW-0072">Autophagy</keyword>
<keyword id="KW-0963">Cytoplasm</keyword>
<keyword id="KW-0597">Phosphoprotein</keyword>
<keyword id="KW-1185">Reference proteome</keyword>
<dbReference type="EMBL" id="BC123504">
    <property type="protein sequence ID" value="AAI23505.1"/>
    <property type="molecule type" value="mRNA"/>
</dbReference>
<dbReference type="RefSeq" id="NP_001070280.1">
    <property type="nucleotide sequence ID" value="NM_001076812.1"/>
</dbReference>
<dbReference type="RefSeq" id="XP_005216493.1">
    <property type="nucleotide sequence ID" value="XM_005216436.4"/>
</dbReference>
<dbReference type="SMR" id="Q08DY8"/>
<dbReference type="FunCoup" id="Q08DY8">
    <property type="interactions" value="3151"/>
</dbReference>
<dbReference type="STRING" id="9913.ENSBTAP00000023036"/>
<dbReference type="PaxDb" id="9913-ENSBTAP00000023036"/>
<dbReference type="GeneID" id="507340"/>
<dbReference type="KEGG" id="bta:507340"/>
<dbReference type="CTD" id="9776"/>
<dbReference type="VEuPathDB" id="HostDB:ENSBTAG00000017325"/>
<dbReference type="eggNOG" id="KOG3874">
    <property type="taxonomic scope" value="Eukaryota"/>
</dbReference>
<dbReference type="HOGENOM" id="CLU_036365_0_0_1"/>
<dbReference type="InParanoid" id="Q08DY8"/>
<dbReference type="OMA" id="ETWYISL"/>
<dbReference type="OrthoDB" id="70161at2759"/>
<dbReference type="TreeFam" id="TF321599"/>
<dbReference type="Reactome" id="R-BTA-1632852">
    <property type="pathway name" value="Macroautophagy"/>
</dbReference>
<dbReference type="Proteomes" id="UP000009136">
    <property type="component" value="Chromosome 15"/>
</dbReference>
<dbReference type="Bgee" id="ENSBTAG00000017325">
    <property type="expression patterns" value="Expressed in pigment epithelium of eye and 106 other cell types or tissues"/>
</dbReference>
<dbReference type="GO" id="GO:1990316">
    <property type="term" value="C:Atg1/ULK1 kinase complex"/>
    <property type="evidence" value="ECO:0000318"/>
    <property type="project" value="GO_Central"/>
</dbReference>
<dbReference type="GO" id="GO:0005776">
    <property type="term" value="C:autophagosome"/>
    <property type="evidence" value="ECO:0000318"/>
    <property type="project" value="GO_Central"/>
</dbReference>
<dbReference type="GO" id="GO:0005829">
    <property type="term" value="C:cytosol"/>
    <property type="evidence" value="ECO:0000318"/>
    <property type="project" value="GO_Central"/>
</dbReference>
<dbReference type="GO" id="GO:0000407">
    <property type="term" value="C:phagophore assembly site"/>
    <property type="evidence" value="ECO:0000250"/>
    <property type="project" value="UniProtKB"/>
</dbReference>
<dbReference type="GO" id="GO:0019887">
    <property type="term" value="F:protein kinase regulator activity"/>
    <property type="evidence" value="ECO:0000318"/>
    <property type="project" value="GO_Central"/>
</dbReference>
<dbReference type="GO" id="GO:0000045">
    <property type="term" value="P:autophagosome assembly"/>
    <property type="evidence" value="ECO:0000250"/>
    <property type="project" value="UniProtKB"/>
</dbReference>
<dbReference type="GO" id="GO:0000423">
    <property type="term" value="P:mitophagy"/>
    <property type="evidence" value="ECO:0000318"/>
    <property type="project" value="GO_Central"/>
</dbReference>
<dbReference type="GO" id="GO:0034727">
    <property type="term" value="P:piecemeal microautophagy of the nucleus"/>
    <property type="evidence" value="ECO:0000318"/>
    <property type="project" value="GO_Central"/>
</dbReference>
<dbReference type="GO" id="GO:0034497">
    <property type="term" value="P:protein localization to phagophore assembly site"/>
    <property type="evidence" value="ECO:0000318"/>
    <property type="project" value="GO_Central"/>
</dbReference>
<dbReference type="FunFam" id="3.30.900.10:FF:000001">
    <property type="entry name" value="Autophagy-related protein 13"/>
    <property type="match status" value="1"/>
</dbReference>
<dbReference type="Gene3D" id="3.30.900.10">
    <property type="entry name" value="HORMA domain"/>
    <property type="match status" value="1"/>
</dbReference>
<dbReference type="InterPro" id="IPR040182">
    <property type="entry name" value="ATG13"/>
</dbReference>
<dbReference type="InterPro" id="IPR036570">
    <property type="entry name" value="HORMA_dom_sf"/>
</dbReference>
<dbReference type="PANTHER" id="PTHR13430">
    <property type="match status" value="1"/>
</dbReference>
<dbReference type="PANTHER" id="PTHR13430:SF4">
    <property type="entry name" value="AUTOPHAGY-RELATED PROTEIN 13"/>
    <property type="match status" value="1"/>
</dbReference>
<name>ATG13_BOVIN</name>
<feature type="chain" id="PRO_0000345150" description="Autophagy-related protein 13">
    <location>
        <begin position="1"/>
        <end position="480"/>
    </location>
</feature>
<feature type="region of interest" description="Important for interaction with ATG101" evidence="2">
    <location>
        <begin position="127"/>
        <end position="134"/>
    </location>
</feature>
<feature type="region of interest" description="Disordered" evidence="4">
    <location>
        <begin position="254"/>
        <end position="323"/>
    </location>
</feature>
<feature type="region of interest" description="Disordered" evidence="4">
    <location>
        <begin position="368"/>
        <end position="403"/>
    </location>
</feature>
<feature type="short sequence motif" description="LIR" evidence="1">
    <location>
        <begin position="407"/>
        <end position="410"/>
    </location>
</feature>
<feature type="compositionally biased region" description="Polar residues" evidence="4">
    <location>
        <begin position="305"/>
        <end position="321"/>
    </location>
</feature>
<feature type="modified residue" description="N-acetylmethionine" evidence="2">
    <location>
        <position position="1"/>
    </location>
</feature>
<feature type="modified residue" description="Phosphoserine; by ULK1" evidence="2">
    <location>
        <position position="318"/>
    </location>
</feature>
<feature type="modified residue" description="Phosphoserine" evidence="2">
    <location>
        <position position="319"/>
    </location>
</feature>
<feature type="modified residue" description="Phosphoserine" evidence="2">
    <location>
        <position position="324"/>
    </location>
</feature>
<accession>Q08DY8</accession>
<gene>
    <name type="primary">ATG13</name>
</gene>
<organism>
    <name type="scientific">Bos taurus</name>
    <name type="common">Bovine</name>
    <dbReference type="NCBI Taxonomy" id="9913"/>
    <lineage>
        <taxon>Eukaryota</taxon>
        <taxon>Metazoa</taxon>
        <taxon>Chordata</taxon>
        <taxon>Craniata</taxon>
        <taxon>Vertebrata</taxon>
        <taxon>Euteleostomi</taxon>
        <taxon>Mammalia</taxon>
        <taxon>Eutheria</taxon>
        <taxon>Laurasiatheria</taxon>
        <taxon>Artiodactyla</taxon>
        <taxon>Ruminantia</taxon>
        <taxon>Pecora</taxon>
        <taxon>Bovidae</taxon>
        <taxon>Bovinae</taxon>
        <taxon>Bos</taxon>
    </lineage>
</organism>
<sequence length="480" mass="52426">METDLNSQDRKDLDKFIKFFALKTVQVIVQARLGEKICTRSSSSPTGSDWFNLAIKDIPEVTHEAKKALAGQLPAVGRSMCVEISLKTSEGDSMELEIWCLEMNEKCDKEIKVSYAVYNRLSLLLKSLLAITRVTPAYRLSRKQGHEYVILYRIYFGDVQLNGLGEGFQTVRVGTVGTPVGTITLSCAYRINLAFMSTRHFERTPPIMGIIIDHFVDRPYPSSSPMHPCNYRTAGEDTGVACPSVEDSQEVCATSFSTSPPSQLMVPGKEGGVPLGPSQPAHAAQADQERLATYTPSDGAHCAATPSSSEDAETVSNSSEGRASPHDVLETIFVRKVGAFVNKPINQVTLTSLDIPFAMFAPKNLELEDADPMVNPPDSPETTSPLQGSLHSDGSSGGSSGHTQDDFVMIDFKPAFSKDDILPMDLGTFYREFQNPPQLSSLSLDIGAQSMAEDLDSLPEKLAAHEKNVREFDAFVETLQ</sequence>